<dbReference type="EC" id="2.7.13.3"/>
<dbReference type="EMBL" id="CP000255">
    <property type="protein sequence ID" value="ABD21101.1"/>
    <property type="molecule type" value="Genomic_DNA"/>
</dbReference>
<dbReference type="RefSeq" id="WP_000166801.1">
    <property type="nucleotide sequence ID" value="NZ_CP027476.1"/>
</dbReference>
<dbReference type="SMR" id="Q2FH24"/>
<dbReference type="KEGG" id="saa:SAUSA300_1307"/>
<dbReference type="HOGENOM" id="CLU_000445_89_6_9"/>
<dbReference type="OMA" id="ANDLLWW"/>
<dbReference type="Proteomes" id="UP000001939">
    <property type="component" value="Chromosome"/>
</dbReference>
<dbReference type="GO" id="GO:0005886">
    <property type="term" value="C:plasma membrane"/>
    <property type="evidence" value="ECO:0007669"/>
    <property type="project" value="UniProtKB-SubCell"/>
</dbReference>
<dbReference type="GO" id="GO:0005524">
    <property type="term" value="F:ATP binding"/>
    <property type="evidence" value="ECO:0007669"/>
    <property type="project" value="UniProtKB-KW"/>
</dbReference>
<dbReference type="GO" id="GO:0000155">
    <property type="term" value="F:phosphorelay sensor kinase activity"/>
    <property type="evidence" value="ECO:0007669"/>
    <property type="project" value="InterPro"/>
</dbReference>
<dbReference type="CDD" id="cd00075">
    <property type="entry name" value="HATPase"/>
    <property type="match status" value="1"/>
</dbReference>
<dbReference type="CDD" id="cd00082">
    <property type="entry name" value="HisKA"/>
    <property type="match status" value="1"/>
</dbReference>
<dbReference type="FunFam" id="3.30.565.10:FF:000006">
    <property type="entry name" value="Sensor histidine kinase WalK"/>
    <property type="match status" value="1"/>
</dbReference>
<dbReference type="FunFam" id="1.10.287.130:FF:000001">
    <property type="entry name" value="Two-component sensor histidine kinase"/>
    <property type="match status" value="1"/>
</dbReference>
<dbReference type="Gene3D" id="1.10.287.130">
    <property type="match status" value="1"/>
</dbReference>
<dbReference type="Gene3D" id="6.10.340.10">
    <property type="match status" value="1"/>
</dbReference>
<dbReference type="Gene3D" id="3.30.565.10">
    <property type="entry name" value="Histidine kinase-like ATPase, C-terminal domain"/>
    <property type="match status" value="1"/>
</dbReference>
<dbReference type="InterPro" id="IPR041610">
    <property type="entry name" value="ArlS_N"/>
</dbReference>
<dbReference type="InterPro" id="IPR050398">
    <property type="entry name" value="Bact_Sensor_His_Kinase"/>
</dbReference>
<dbReference type="InterPro" id="IPR003660">
    <property type="entry name" value="HAMP_dom"/>
</dbReference>
<dbReference type="InterPro" id="IPR036890">
    <property type="entry name" value="HATPase_C_sf"/>
</dbReference>
<dbReference type="InterPro" id="IPR005467">
    <property type="entry name" value="His_kinase_dom"/>
</dbReference>
<dbReference type="InterPro" id="IPR003661">
    <property type="entry name" value="HisK_dim/P_dom"/>
</dbReference>
<dbReference type="InterPro" id="IPR036097">
    <property type="entry name" value="HisK_dim/P_sf"/>
</dbReference>
<dbReference type="InterPro" id="IPR004358">
    <property type="entry name" value="Sig_transdc_His_kin-like_C"/>
</dbReference>
<dbReference type="PANTHER" id="PTHR45528:SF12">
    <property type="entry name" value="SENSOR HISTIDINE KINASE ARSS"/>
    <property type="match status" value="1"/>
</dbReference>
<dbReference type="PANTHER" id="PTHR45528">
    <property type="entry name" value="SENSOR HISTIDINE KINASE CPXA"/>
    <property type="match status" value="1"/>
</dbReference>
<dbReference type="Pfam" id="PF18719">
    <property type="entry name" value="ArlS_N"/>
    <property type="match status" value="1"/>
</dbReference>
<dbReference type="Pfam" id="PF02518">
    <property type="entry name" value="HATPase_c"/>
    <property type="match status" value="1"/>
</dbReference>
<dbReference type="Pfam" id="PF00512">
    <property type="entry name" value="HisKA"/>
    <property type="match status" value="1"/>
</dbReference>
<dbReference type="PRINTS" id="PR00344">
    <property type="entry name" value="BCTRLSENSOR"/>
</dbReference>
<dbReference type="SMART" id="SM00387">
    <property type="entry name" value="HATPase_c"/>
    <property type="match status" value="1"/>
</dbReference>
<dbReference type="SMART" id="SM00388">
    <property type="entry name" value="HisKA"/>
    <property type="match status" value="1"/>
</dbReference>
<dbReference type="SUPFAM" id="SSF55874">
    <property type="entry name" value="ATPase domain of HSP90 chaperone/DNA topoisomerase II/histidine kinase"/>
    <property type="match status" value="1"/>
</dbReference>
<dbReference type="SUPFAM" id="SSF158472">
    <property type="entry name" value="HAMP domain-like"/>
    <property type="match status" value="1"/>
</dbReference>
<dbReference type="SUPFAM" id="SSF47384">
    <property type="entry name" value="Homodimeric domain of signal transducing histidine kinase"/>
    <property type="match status" value="1"/>
</dbReference>
<dbReference type="PROSITE" id="PS50885">
    <property type="entry name" value="HAMP"/>
    <property type="match status" value="1"/>
</dbReference>
<dbReference type="PROSITE" id="PS50109">
    <property type="entry name" value="HIS_KIN"/>
    <property type="match status" value="1"/>
</dbReference>
<evidence type="ECO:0000250" key="1"/>
<evidence type="ECO:0000255" key="2"/>
<evidence type="ECO:0000255" key="3">
    <source>
        <dbReference type="PROSITE-ProRule" id="PRU00102"/>
    </source>
</evidence>
<evidence type="ECO:0000255" key="4">
    <source>
        <dbReference type="PROSITE-ProRule" id="PRU00107"/>
    </source>
</evidence>
<proteinExistence type="inferred from homology"/>
<sequence length="451" mass="52400">MTKRKLRNNWIIVTTMITFVTIFLFCLIIIFFLKDTLHNSELDDAERSSSDINNLFHSKPVKDISALDLNASLGNFQEIIIYDEHNNKLFETSNDNTVRVEPGYEHRYFDRVIKKRYKGIEYLIIKEPITTQDFKGYSLLIHSLENYDNIVKSLYIIALAFGVIATIITATISYVFSTQITKPLVSLSNKMIEIRRDGFQNKLQLNTNYEEIDNLANTFNEMMSQIEESFNQQRQFVEDASHELRTPLQIIQGHLNLIQRWGKKDPAVLEESLNISIEEMNRIIKLVEELLELTKGDVNDISSEAQTVHINDEIRSRIHSLKQLHPDYQFDTDLTSKNLEIKMKPHQFEQLFLIFIDNAIKYDVKNKKIKVKTRLKNKQKIIEITDHGIGIPEEDQDFIFDRFYRVDKSRSRSQGGNGLGLSIAQKIIQLNGGSIKIKSEINKGTTFKIIF</sequence>
<feature type="chain" id="PRO_0000293448" description="Signal transduction histidine-protein kinase ArlS">
    <location>
        <begin position="1"/>
        <end position="451"/>
    </location>
</feature>
<feature type="transmembrane region" description="Helical" evidence="2">
    <location>
        <begin position="11"/>
        <end position="31"/>
    </location>
</feature>
<feature type="transmembrane region" description="Helical" evidence="2">
    <location>
        <begin position="156"/>
        <end position="176"/>
    </location>
</feature>
<feature type="domain" description="HAMP" evidence="3">
    <location>
        <begin position="178"/>
        <end position="231"/>
    </location>
</feature>
<feature type="domain" description="Histidine kinase" evidence="4">
    <location>
        <begin position="239"/>
        <end position="451"/>
    </location>
</feature>
<feature type="modified residue" description="Phosphohistidine; by autocatalysis" evidence="4">
    <location>
        <position position="242"/>
    </location>
</feature>
<organism>
    <name type="scientific">Staphylococcus aureus (strain USA300)</name>
    <dbReference type="NCBI Taxonomy" id="367830"/>
    <lineage>
        <taxon>Bacteria</taxon>
        <taxon>Bacillati</taxon>
        <taxon>Bacillota</taxon>
        <taxon>Bacilli</taxon>
        <taxon>Bacillales</taxon>
        <taxon>Staphylococcaceae</taxon>
        <taxon>Staphylococcus</taxon>
    </lineage>
</organism>
<protein>
    <recommendedName>
        <fullName>Signal transduction histidine-protein kinase ArlS</fullName>
        <ecNumber>2.7.13.3</ecNumber>
    </recommendedName>
</protein>
<name>ARLS_STAA3</name>
<gene>
    <name type="primary">arlS</name>
    <name type="ordered locus">SAUSA300_1307</name>
</gene>
<accession>Q2FH24</accession>
<comment type="function">
    <text evidence="1">Member of the two-component regulatory system ArlS/ArlR involved in the regulation of adhesion, autolysis, multidrug resistance and virulence. ArlS probably functions as a sensor protein kinase which is autophosphorylated at a histidine residue and transfers its phosphate group to ArlR (By similarity).</text>
</comment>
<comment type="catalytic activity">
    <reaction>
        <text>ATP + protein L-histidine = ADP + protein N-phospho-L-histidine.</text>
        <dbReference type="EC" id="2.7.13.3"/>
    </reaction>
</comment>
<comment type="subcellular location">
    <subcellularLocation>
        <location evidence="1">Cell membrane</location>
        <topology evidence="1">Multi-pass membrane protein</topology>
    </subcellularLocation>
</comment>
<comment type="PTM">
    <text evidence="1">Autophosphorylated.</text>
</comment>
<reference key="1">
    <citation type="journal article" date="2006" name="Lancet">
        <title>Complete genome sequence of USA300, an epidemic clone of community-acquired meticillin-resistant Staphylococcus aureus.</title>
        <authorList>
            <person name="Diep B.A."/>
            <person name="Gill S.R."/>
            <person name="Chang R.F."/>
            <person name="Phan T.H."/>
            <person name="Chen J.H."/>
            <person name="Davidson M.G."/>
            <person name="Lin F."/>
            <person name="Lin J."/>
            <person name="Carleton H.A."/>
            <person name="Mongodin E.F."/>
            <person name="Sensabaugh G.F."/>
            <person name="Perdreau-Remington F."/>
        </authorList>
    </citation>
    <scope>NUCLEOTIDE SEQUENCE [LARGE SCALE GENOMIC DNA]</scope>
    <source>
        <strain>USA300</strain>
    </source>
</reference>
<keyword id="KW-0067">ATP-binding</keyword>
<keyword id="KW-1003">Cell membrane</keyword>
<keyword id="KW-0418">Kinase</keyword>
<keyword id="KW-0472">Membrane</keyword>
<keyword id="KW-0547">Nucleotide-binding</keyword>
<keyword id="KW-0597">Phosphoprotein</keyword>
<keyword id="KW-0808">Transferase</keyword>
<keyword id="KW-0812">Transmembrane</keyword>
<keyword id="KW-1133">Transmembrane helix</keyword>
<keyword id="KW-0902">Two-component regulatory system</keyword>
<keyword id="KW-0843">Virulence</keyword>